<comment type="function">
    <text evidence="1">Binds to the 23S rRNA.</text>
</comment>
<comment type="subunit">
    <text evidence="1">Part of the 50S ribosomal subunit.</text>
</comment>
<comment type="similarity">
    <text evidence="1">Belongs to the universal ribosomal protein uL15 family.</text>
</comment>
<feature type="chain" id="PRO_0000251516" description="Large ribosomal subunit protein uL15">
    <location>
        <begin position="1"/>
        <end position="148"/>
    </location>
</feature>
<feature type="region of interest" description="Disordered" evidence="2">
    <location>
        <begin position="1"/>
        <end position="61"/>
    </location>
</feature>
<feature type="compositionally biased region" description="Basic residues" evidence="2">
    <location>
        <begin position="30"/>
        <end position="39"/>
    </location>
</feature>
<organism>
    <name type="scientific">Geobacter metallireducens (strain ATCC 53774 / DSM 7210 / GS-15)</name>
    <dbReference type="NCBI Taxonomy" id="269799"/>
    <lineage>
        <taxon>Bacteria</taxon>
        <taxon>Pseudomonadati</taxon>
        <taxon>Thermodesulfobacteriota</taxon>
        <taxon>Desulfuromonadia</taxon>
        <taxon>Geobacterales</taxon>
        <taxon>Geobacteraceae</taxon>
        <taxon>Geobacter</taxon>
    </lineage>
</organism>
<name>RL15_GEOMG</name>
<accession>Q39XY7</accession>
<protein>
    <recommendedName>
        <fullName evidence="1">Large ribosomal subunit protein uL15</fullName>
    </recommendedName>
    <alternativeName>
        <fullName evidence="3">50S ribosomal protein L15</fullName>
    </alternativeName>
</protein>
<sequence length="148" mass="15655">MELNNLKPAIGATKDRKRIGRGTGSGHGKTATKGHKGQKARSGGSIKAGFEGGQMPMQRRLPKRGFTPLMRKDYAIVNIGQLDVFESGSTVDAEALLNAGLISGVKDGIKVLADGDVTKSLVVKVHKYSAKAKEKIEAVGGKIEEITL</sequence>
<reference key="1">
    <citation type="journal article" date="2009" name="BMC Microbiol.">
        <title>The genome sequence of Geobacter metallireducens: features of metabolism, physiology and regulation common and dissimilar to Geobacter sulfurreducens.</title>
        <authorList>
            <person name="Aklujkar M."/>
            <person name="Krushkal J."/>
            <person name="DiBartolo G."/>
            <person name="Lapidus A."/>
            <person name="Land M.L."/>
            <person name="Lovley D.R."/>
        </authorList>
    </citation>
    <scope>NUCLEOTIDE SEQUENCE [LARGE SCALE GENOMIC DNA]</scope>
    <source>
        <strain>ATCC 53774 / DSM 7210 / GS-15</strain>
    </source>
</reference>
<proteinExistence type="inferred from homology"/>
<evidence type="ECO:0000255" key="1">
    <source>
        <dbReference type="HAMAP-Rule" id="MF_01341"/>
    </source>
</evidence>
<evidence type="ECO:0000256" key="2">
    <source>
        <dbReference type="SAM" id="MobiDB-lite"/>
    </source>
</evidence>
<evidence type="ECO:0000305" key="3"/>
<gene>
    <name evidence="1" type="primary">rplO</name>
    <name type="ordered locus">Gmet_0645</name>
</gene>
<keyword id="KW-1185">Reference proteome</keyword>
<keyword id="KW-0687">Ribonucleoprotein</keyword>
<keyword id="KW-0689">Ribosomal protein</keyword>
<keyword id="KW-0694">RNA-binding</keyword>
<keyword id="KW-0699">rRNA-binding</keyword>
<dbReference type="EMBL" id="CP000148">
    <property type="protein sequence ID" value="ABB30887.1"/>
    <property type="molecule type" value="Genomic_DNA"/>
</dbReference>
<dbReference type="RefSeq" id="WP_011365701.1">
    <property type="nucleotide sequence ID" value="NC_007517.1"/>
</dbReference>
<dbReference type="SMR" id="Q39XY7"/>
<dbReference type="STRING" id="269799.Gmet_0645"/>
<dbReference type="KEGG" id="gme:Gmet_0645"/>
<dbReference type="eggNOG" id="COG0200">
    <property type="taxonomic scope" value="Bacteria"/>
</dbReference>
<dbReference type="HOGENOM" id="CLU_055188_4_2_7"/>
<dbReference type="Proteomes" id="UP000007073">
    <property type="component" value="Chromosome"/>
</dbReference>
<dbReference type="GO" id="GO:0022625">
    <property type="term" value="C:cytosolic large ribosomal subunit"/>
    <property type="evidence" value="ECO:0007669"/>
    <property type="project" value="TreeGrafter"/>
</dbReference>
<dbReference type="GO" id="GO:0019843">
    <property type="term" value="F:rRNA binding"/>
    <property type="evidence" value="ECO:0007669"/>
    <property type="project" value="UniProtKB-UniRule"/>
</dbReference>
<dbReference type="GO" id="GO:0003735">
    <property type="term" value="F:structural constituent of ribosome"/>
    <property type="evidence" value="ECO:0007669"/>
    <property type="project" value="InterPro"/>
</dbReference>
<dbReference type="GO" id="GO:0006412">
    <property type="term" value="P:translation"/>
    <property type="evidence" value="ECO:0007669"/>
    <property type="project" value="UniProtKB-UniRule"/>
</dbReference>
<dbReference type="Gene3D" id="3.100.10.10">
    <property type="match status" value="1"/>
</dbReference>
<dbReference type="HAMAP" id="MF_01341">
    <property type="entry name" value="Ribosomal_uL15"/>
    <property type="match status" value="1"/>
</dbReference>
<dbReference type="InterPro" id="IPR030878">
    <property type="entry name" value="Ribosomal_uL15"/>
</dbReference>
<dbReference type="InterPro" id="IPR021131">
    <property type="entry name" value="Ribosomal_uL15/eL18"/>
</dbReference>
<dbReference type="InterPro" id="IPR036227">
    <property type="entry name" value="Ribosomal_uL15/eL18_sf"/>
</dbReference>
<dbReference type="InterPro" id="IPR005749">
    <property type="entry name" value="Ribosomal_uL15_bac-type"/>
</dbReference>
<dbReference type="NCBIfam" id="TIGR01071">
    <property type="entry name" value="rplO_bact"/>
    <property type="match status" value="1"/>
</dbReference>
<dbReference type="PANTHER" id="PTHR12934">
    <property type="entry name" value="50S RIBOSOMAL PROTEIN L15"/>
    <property type="match status" value="1"/>
</dbReference>
<dbReference type="PANTHER" id="PTHR12934:SF11">
    <property type="entry name" value="LARGE RIBOSOMAL SUBUNIT PROTEIN UL15M"/>
    <property type="match status" value="1"/>
</dbReference>
<dbReference type="Pfam" id="PF00828">
    <property type="entry name" value="Ribosomal_L27A"/>
    <property type="match status" value="1"/>
</dbReference>
<dbReference type="SUPFAM" id="SSF52080">
    <property type="entry name" value="Ribosomal proteins L15p and L18e"/>
    <property type="match status" value="1"/>
</dbReference>